<gene>
    <name evidence="1" type="primary">iscS</name>
    <name type="ordered locus">AHA_1747</name>
</gene>
<protein>
    <recommendedName>
        <fullName evidence="1">Cysteine desulfurase IscS</fullName>
        <ecNumber evidence="1">2.8.1.7</ecNumber>
    </recommendedName>
</protein>
<organism>
    <name type="scientific">Aeromonas hydrophila subsp. hydrophila (strain ATCC 7966 / DSM 30187 / BCRC 13018 / CCUG 14551 / JCM 1027 / KCTC 2358 / NCIMB 9240 / NCTC 8049)</name>
    <dbReference type="NCBI Taxonomy" id="380703"/>
    <lineage>
        <taxon>Bacteria</taxon>
        <taxon>Pseudomonadati</taxon>
        <taxon>Pseudomonadota</taxon>
        <taxon>Gammaproteobacteria</taxon>
        <taxon>Aeromonadales</taxon>
        <taxon>Aeromonadaceae</taxon>
        <taxon>Aeromonas</taxon>
    </lineage>
</organism>
<comment type="function">
    <text evidence="1">Master enzyme that delivers sulfur to a number of partners involved in Fe-S cluster assembly, tRNA modification or cofactor biosynthesis. Catalyzes the removal of elemental sulfur atoms from cysteine to produce alanine. Functions as a sulfur delivery protein for Fe-S cluster synthesis onto IscU, an Fe-S scaffold assembly protein, as well as other S acceptor proteins.</text>
</comment>
<comment type="catalytic activity">
    <reaction evidence="1">
        <text>(sulfur carrier)-H + L-cysteine = (sulfur carrier)-SH + L-alanine</text>
        <dbReference type="Rhea" id="RHEA:43892"/>
        <dbReference type="Rhea" id="RHEA-COMP:14737"/>
        <dbReference type="Rhea" id="RHEA-COMP:14739"/>
        <dbReference type="ChEBI" id="CHEBI:29917"/>
        <dbReference type="ChEBI" id="CHEBI:35235"/>
        <dbReference type="ChEBI" id="CHEBI:57972"/>
        <dbReference type="ChEBI" id="CHEBI:64428"/>
        <dbReference type="EC" id="2.8.1.7"/>
    </reaction>
</comment>
<comment type="cofactor">
    <cofactor evidence="1">
        <name>pyridoxal 5'-phosphate</name>
        <dbReference type="ChEBI" id="CHEBI:597326"/>
    </cofactor>
</comment>
<comment type="pathway">
    <text evidence="1">Cofactor biosynthesis; iron-sulfur cluster biosynthesis.</text>
</comment>
<comment type="subunit">
    <text evidence="1">Homodimer. Forms a heterotetramer with IscU, interacts with other sulfur acceptors.</text>
</comment>
<comment type="subcellular location">
    <subcellularLocation>
        <location evidence="1">Cytoplasm</location>
    </subcellularLocation>
</comment>
<comment type="similarity">
    <text evidence="1">Belongs to the class-V pyridoxal-phosphate-dependent aminotransferase family. NifS/IscS subfamily.</text>
</comment>
<sequence>MKLPIYLDYSATCPVDPRVAEKMMQCLTMDGLFGNPASRSHRFGWQAEEAVDLARNQVAELIGADPREIVFTSGATESNNLAIKGVAHFYAGKGKHIVTSKTEHKAVLDTCRQLEREGYEVTYLEPMPNGLFTLEQIEGALRDDTILVSIMHVNNEIGVVQNIAAIGELCRSRKILLHVDAVQSVGKIPVDVEALKVDLLSMSAHKVYGPKGIGALYVRRKPRVRLEAQMHGGGHERGMRSGTLPTHQIVGMGEAFRIAKEEMVSEGQRIMALRQRLWDGIKDIEAVYINGDLEQRVPGNLNVSFAYVEGESLIMALKDLAVSSGSACTSASLEPSYVLRALGLNDELAHSSIRFSMGRFTTEEEIDYAIKLIRDSIGRLREMSPLWEMYKDGVDLNTVEWAHH</sequence>
<name>ISCS_AERHH</name>
<feature type="chain" id="PRO_1000019400" description="Cysteine desulfurase IscS">
    <location>
        <begin position="1"/>
        <end position="404"/>
    </location>
</feature>
<feature type="active site" description="Cysteine persulfide intermediate" evidence="1">
    <location>
        <position position="328"/>
    </location>
</feature>
<feature type="binding site" evidence="1">
    <location>
        <begin position="75"/>
        <end position="76"/>
    </location>
    <ligand>
        <name>pyridoxal 5'-phosphate</name>
        <dbReference type="ChEBI" id="CHEBI:597326"/>
    </ligand>
</feature>
<feature type="binding site" evidence="1">
    <location>
        <position position="155"/>
    </location>
    <ligand>
        <name>pyridoxal 5'-phosphate</name>
        <dbReference type="ChEBI" id="CHEBI:597326"/>
    </ligand>
</feature>
<feature type="binding site" evidence="1">
    <location>
        <position position="183"/>
    </location>
    <ligand>
        <name>pyridoxal 5'-phosphate</name>
        <dbReference type="ChEBI" id="CHEBI:597326"/>
    </ligand>
</feature>
<feature type="binding site" evidence="1">
    <location>
        <begin position="203"/>
        <end position="205"/>
    </location>
    <ligand>
        <name>pyridoxal 5'-phosphate</name>
        <dbReference type="ChEBI" id="CHEBI:597326"/>
    </ligand>
</feature>
<feature type="binding site" evidence="1">
    <location>
        <position position="243"/>
    </location>
    <ligand>
        <name>pyridoxal 5'-phosphate</name>
        <dbReference type="ChEBI" id="CHEBI:597326"/>
    </ligand>
</feature>
<feature type="binding site" description="via persulfide group" evidence="1">
    <location>
        <position position="328"/>
    </location>
    <ligand>
        <name>[2Fe-2S] cluster</name>
        <dbReference type="ChEBI" id="CHEBI:190135"/>
        <note>ligand shared with IscU</note>
    </ligand>
</feature>
<feature type="modified residue" description="N6-(pyridoxal phosphate)lysine" evidence="1">
    <location>
        <position position="206"/>
    </location>
</feature>
<dbReference type="EC" id="2.8.1.7" evidence="1"/>
<dbReference type="EMBL" id="CP000462">
    <property type="protein sequence ID" value="ABK37836.1"/>
    <property type="molecule type" value="Genomic_DNA"/>
</dbReference>
<dbReference type="RefSeq" id="WP_011705635.1">
    <property type="nucleotide sequence ID" value="NC_008570.1"/>
</dbReference>
<dbReference type="RefSeq" id="YP_856283.1">
    <property type="nucleotide sequence ID" value="NC_008570.1"/>
</dbReference>
<dbReference type="SMR" id="A0KJ32"/>
<dbReference type="STRING" id="380703.AHA_1747"/>
<dbReference type="EnsemblBacteria" id="ABK37836">
    <property type="protein sequence ID" value="ABK37836"/>
    <property type="gene ID" value="AHA_1747"/>
</dbReference>
<dbReference type="GeneID" id="4490316"/>
<dbReference type="KEGG" id="aha:AHA_1747"/>
<dbReference type="PATRIC" id="fig|380703.7.peg.1761"/>
<dbReference type="eggNOG" id="COG1104">
    <property type="taxonomic scope" value="Bacteria"/>
</dbReference>
<dbReference type="HOGENOM" id="CLU_003433_0_2_6"/>
<dbReference type="OrthoDB" id="9808002at2"/>
<dbReference type="UniPathway" id="UPA00266"/>
<dbReference type="Proteomes" id="UP000000756">
    <property type="component" value="Chromosome"/>
</dbReference>
<dbReference type="GO" id="GO:1990221">
    <property type="term" value="C:L-cysteine desulfurase complex"/>
    <property type="evidence" value="ECO:0007669"/>
    <property type="project" value="UniProtKB-ARBA"/>
</dbReference>
<dbReference type="GO" id="GO:0051537">
    <property type="term" value="F:2 iron, 2 sulfur cluster binding"/>
    <property type="evidence" value="ECO:0007669"/>
    <property type="project" value="UniProtKB-UniRule"/>
</dbReference>
<dbReference type="GO" id="GO:0031071">
    <property type="term" value="F:cysteine desulfurase activity"/>
    <property type="evidence" value="ECO:0007669"/>
    <property type="project" value="UniProtKB-UniRule"/>
</dbReference>
<dbReference type="GO" id="GO:0046872">
    <property type="term" value="F:metal ion binding"/>
    <property type="evidence" value="ECO:0007669"/>
    <property type="project" value="UniProtKB-KW"/>
</dbReference>
<dbReference type="GO" id="GO:0030170">
    <property type="term" value="F:pyridoxal phosphate binding"/>
    <property type="evidence" value="ECO:0007669"/>
    <property type="project" value="UniProtKB-UniRule"/>
</dbReference>
<dbReference type="GO" id="GO:0044571">
    <property type="term" value="P:[2Fe-2S] cluster assembly"/>
    <property type="evidence" value="ECO:0007669"/>
    <property type="project" value="UniProtKB-UniRule"/>
</dbReference>
<dbReference type="FunFam" id="3.40.640.10:FF:000003">
    <property type="entry name" value="Cysteine desulfurase IscS"/>
    <property type="match status" value="1"/>
</dbReference>
<dbReference type="FunFam" id="3.90.1150.10:FF:000002">
    <property type="entry name" value="Cysteine desulfurase IscS"/>
    <property type="match status" value="1"/>
</dbReference>
<dbReference type="Gene3D" id="3.90.1150.10">
    <property type="entry name" value="Aspartate Aminotransferase, domain 1"/>
    <property type="match status" value="1"/>
</dbReference>
<dbReference type="Gene3D" id="3.40.640.10">
    <property type="entry name" value="Type I PLP-dependent aspartate aminotransferase-like (Major domain)"/>
    <property type="match status" value="1"/>
</dbReference>
<dbReference type="HAMAP" id="MF_00331">
    <property type="entry name" value="Cys_desulf_IscS"/>
    <property type="match status" value="1"/>
</dbReference>
<dbReference type="InterPro" id="IPR000192">
    <property type="entry name" value="Aminotrans_V_dom"/>
</dbReference>
<dbReference type="InterPro" id="IPR020578">
    <property type="entry name" value="Aminotrans_V_PyrdxlP_BS"/>
</dbReference>
<dbReference type="InterPro" id="IPR010240">
    <property type="entry name" value="Cys_deSase_IscS"/>
</dbReference>
<dbReference type="InterPro" id="IPR016454">
    <property type="entry name" value="Cysteine_dSase"/>
</dbReference>
<dbReference type="InterPro" id="IPR015424">
    <property type="entry name" value="PyrdxlP-dep_Trfase"/>
</dbReference>
<dbReference type="InterPro" id="IPR015421">
    <property type="entry name" value="PyrdxlP-dep_Trfase_major"/>
</dbReference>
<dbReference type="InterPro" id="IPR015422">
    <property type="entry name" value="PyrdxlP-dep_Trfase_small"/>
</dbReference>
<dbReference type="NCBIfam" id="TIGR02006">
    <property type="entry name" value="IscS"/>
    <property type="match status" value="1"/>
</dbReference>
<dbReference type="NCBIfam" id="NF002806">
    <property type="entry name" value="PRK02948.1"/>
    <property type="match status" value="1"/>
</dbReference>
<dbReference type="NCBIfam" id="NF010611">
    <property type="entry name" value="PRK14012.1"/>
    <property type="match status" value="1"/>
</dbReference>
<dbReference type="PANTHER" id="PTHR11601:SF34">
    <property type="entry name" value="CYSTEINE DESULFURASE"/>
    <property type="match status" value="1"/>
</dbReference>
<dbReference type="PANTHER" id="PTHR11601">
    <property type="entry name" value="CYSTEINE DESULFURYLASE FAMILY MEMBER"/>
    <property type="match status" value="1"/>
</dbReference>
<dbReference type="Pfam" id="PF00266">
    <property type="entry name" value="Aminotran_5"/>
    <property type="match status" value="1"/>
</dbReference>
<dbReference type="PIRSF" id="PIRSF005572">
    <property type="entry name" value="NifS"/>
    <property type="match status" value="1"/>
</dbReference>
<dbReference type="SUPFAM" id="SSF53383">
    <property type="entry name" value="PLP-dependent transferases"/>
    <property type="match status" value="1"/>
</dbReference>
<dbReference type="PROSITE" id="PS00595">
    <property type="entry name" value="AA_TRANSFER_CLASS_5"/>
    <property type="match status" value="1"/>
</dbReference>
<evidence type="ECO:0000255" key="1">
    <source>
        <dbReference type="HAMAP-Rule" id="MF_00331"/>
    </source>
</evidence>
<proteinExistence type="inferred from homology"/>
<keyword id="KW-0001">2Fe-2S</keyword>
<keyword id="KW-0963">Cytoplasm</keyword>
<keyword id="KW-0408">Iron</keyword>
<keyword id="KW-0411">Iron-sulfur</keyword>
<keyword id="KW-0479">Metal-binding</keyword>
<keyword id="KW-0663">Pyridoxal phosphate</keyword>
<keyword id="KW-1185">Reference proteome</keyword>
<keyword id="KW-0808">Transferase</keyword>
<accession>A0KJ32</accession>
<reference key="1">
    <citation type="journal article" date="2006" name="J. Bacteriol.">
        <title>Genome sequence of Aeromonas hydrophila ATCC 7966T: jack of all trades.</title>
        <authorList>
            <person name="Seshadri R."/>
            <person name="Joseph S.W."/>
            <person name="Chopra A.K."/>
            <person name="Sha J."/>
            <person name="Shaw J."/>
            <person name="Graf J."/>
            <person name="Haft D.H."/>
            <person name="Wu M."/>
            <person name="Ren Q."/>
            <person name="Rosovitz M.J."/>
            <person name="Madupu R."/>
            <person name="Tallon L."/>
            <person name="Kim M."/>
            <person name="Jin S."/>
            <person name="Vuong H."/>
            <person name="Stine O.C."/>
            <person name="Ali A."/>
            <person name="Horneman A.J."/>
            <person name="Heidelberg J.F."/>
        </authorList>
    </citation>
    <scope>NUCLEOTIDE SEQUENCE [LARGE SCALE GENOMIC DNA]</scope>
    <source>
        <strain>ATCC 7966 / DSM 30187 / BCRC 13018 / CCUG 14551 / JCM 1027 / KCTC 2358 / NCIMB 9240 / NCTC 8049</strain>
    </source>
</reference>